<proteinExistence type="inferred from homology"/>
<gene>
    <name evidence="1" type="primary">leuD</name>
    <name type="ordered locus">Sfri_3817</name>
</gene>
<protein>
    <recommendedName>
        <fullName evidence="1">3-isopropylmalate dehydratase small subunit</fullName>
        <ecNumber evidence="1">4.2.1.33</ecNumber>
    </recommendedName>
    <alternativeName>
        <fullName evidence="1">Alpha-IPM isomerase</fullName>
        <shortName evidence="1">IPMI</shortName>
    </alternativeName>
    <alternativeName>
        <fullName evidence="1">Isopropylmalate isomerase</fullName>
    </alternativeName>
</protein>
<reference key="1">
    <citation type="submission" date="2006-08" db="EMBL/GenBank/DDBJ databases">
        <title>Complete sequence of Shewanella frigidimarina NCIMB 400.</title>
        <authorList>
            <consortium name="US DOE Joint Genome Institute"/>
            <person name="Copeland A."/>
            <person name="Lucas S."/>
            <person name="Lapidus A."/>
            <person name="Barry K."/>
            <person name="Detter J.C."/>
            <person name="Glavina del Rio T."/>
            <person name="Hammon N."/>
            <person name="Israni S."/>
            <person name="Dalin E."/>
            <person name="Tice H."/>
            <person name="Pitluck S."/>
            <person name="Fredrickson J.K."/>
            <person name="Kolker E."/>
            <person name="McCuel L.A."/>
            <person name="DiChristina T."/>
            <person name="Nealson K.H."/>
            <person name="Newman D."/>
            <person name="Tiedje J.M."/>
            <person name="Zhou J."/>
            <person name="Romine M.F."/>
            <person name="Culley D.E."/>
            <person name="Serres M."/>
            <person name="Chertkov O."/>
            <person name="Brettin T."/>
            <person name="Bruce D."/>
            <person name="Han C."/>
            <person name="Tapia R."/>
            <person name="Gilna P."/>
            <person name="Schmutz J."/>
            <person name="Larimer F."/>
            <person name="Land M."/>
            <person name="Hauser L."/>
            <person name="Kyrpides N."/>
            <person name="Mikhailova N."/>
            <person name="Richardson P."/>
        </authorList>
    </citation>
    <scope>NUCLEOTIDE SEQUENCE [LARGE SCALE GENOMIC DNA]</scope>
    <source>
        <strain>NCIMB 400</strain>
    </source>
</reference>
<organism>
    <name type="scientific">Shewanella frigidimarina (strain NCIMB 400)</name>
    <dbReference type="NCBI Taxonomy" id="318167"/>
    <lineage>
        <taxon>Bacteria</taxon>
        <taxon>Pseudomonadati</taxon>
        <taxon>Pseudomonadota</taxon>
        <taxon>Gammaproteobacteria</taxon>
        <taxon>Alteromonadales</taxon>
        <taxon>Shewanellaceae</taxon>
        <taxon>Shewanella</taxon>
    </lineage>
</organism>
<name>LEUD_SHEFN</name>
<evidence type="ECO:0000255" key="1">
    <source>
        <dbReference type="HAMAP-Rule" id="MF_01031"/>
    </source>
</evidence>
<feature type="chain" id="PRO_1000063834" description="3-isopropylmalate dehydratase small subunit">
    <location>
        <begin position="1"/>
        <end position="201"/>
    </location>
</feature>
<sequence length="201" mass="22058">MQAFTAHTGLAVAIDSANVDTDQIIPKQFLSKVTRDGFGVHLFHDWRYLDDAGDKPNPDFELNQPRYKGASILLAQENFGCGSSREHAPWALADFGFRVIIAPTFADIFYGNSINNGLLPVKLTSVQVQQLMDEVAAKEGAQITVDLQALTVTSPSGSVFDFTIVESARHKLLNGLDAIGLTLSFEQQISDYETHIPAWFA</sequence>
<keyword id="KW-0028">Amino-acid biosynthesis</keyword>
<keyword id="KW-0100">Branched-chain amino acid biosynthesis</keyword>
<keyword id="KW-0432">Leucine biosynthesis</keyword>
<keyword id="KW-0456">Lyase</keyword>
<keyword id="KW-1185">Reference proteome</keyword>
<dbReference type="EC" id="4.2.1.33" evidence="1"/>
<dbReference type="EMBL" id="CP000447">
    <property type="protein sequence ID" value="ABI73642.1"/>
    <property type="molecule type" value="Genomic_DNA"/>
</dbReference>
<dbReference type="RefSeq" id="WP_011639227.1">
    <property type="nucleotide sequence ID" value="NC_008345.1"/>
</dbReference>
<dbReference type="SMR" id="Q07WH2"/>
<dbReference type="STRING" id="318167.Sfri_3817"/>
<dbReference type="KEGG" id="sfr:Sfri_3817"/>
<dbReference type="eggNOG" id="COG0066">
    <property type="taxonomic scope" value="Bacteria"/>
</dbReference>
<dbReference type="HOGENOM" id="CLU_081378_0_3_6"/>
<dbReference type="OrthoDB" id="9777465at2"/>
<dbReference type="UniPathway" id="UPA00048">
    <property type="reaction ID" value="UER00071"/>
</dbReference>
<dbReference type="Proteomes" id="UP000000684">
    <property type="component" value="Chromosome"/>
</dbReference>
<dbReference type="GO" id="GO:0009316">
    <property type="term" value="C:3-isopropylmalate dehydratase complex"/>
    <property type="evidence" value="ECO:0007669"/>
    <property type="project" value="InterPro"/>
</dbReference>
<dbReference type="GO" id="GO:0003861">
    <property type="term" value="F:3-isopropylmalate dehydratase activity"/>
    <property type="evidence" value="ECO:0007669"/>
    <property type="project" value="UniProtKB-UniRule"/>
</dbReference>
<dbReference type="GO" id="GO:0009098">
    <property type="term" value="P:L-leucine biosynthetic process"/>
    <property type="evidence" value="ECO:0007669"/>
    <property type="project" value="UniProtKB-UniRule"/>
</dbReference>
<dbReference type="CDD" id="cd01577">
    <property type="entry name" value="IPMI_Swivel"/>
    <property type="match status" value="1"/>
</dbReference>
<dbReference type="FunFam" id="3.20.19.10:FF:000003">
    <property type="entry name" value="3-isopropylmalate dehydratase small subunit"/>
    <property type="match status" value="1"/>
</dbReference>
<dbReference type="Gene3D" id="3.20.19.10">
    <property type="entry name" value="Aconitase, domain 4"/>
    <property type="match status" value="1"/>
</dbReference>
<dbReference type="HAMAP" id="MF_01031">
    <property type="entry name" value="LeuD_type1"/>
    <property type="match status" value="1"/>
</dbReference>
<dbReference type="InterPro" id="IPR004431">
    <property type="entry name" value="3-IsopropMal_deHydase_ssu"/>
</dbReference>
<dbReference type="InterPro" id="IPR015928">
    <property type="entry name" value="Aconitase/3IPM_dehydase_swvl"/>
</dbReference>
<dbReference type="InterPro" id="IPR000573">
    <property type="entry name" value="AconitaseA/IPMdHydase_ssu_swvl"/>
</dbReference>
<dbReference type="InterPro" id="IPR033940">
    <property type="entry name" value="IPMI_Swivel"/>
</dbReference>
<dbReference type="InterPro" id="IPR050075">
    <property type="entry name" value="LeuD"/>
</dbReference>
<dbReference type="NCBIfam" id="TIGR00171">
    <property type="entry name" value="leuD"/>
    <property type="match status" value="1"/>
</dbReference>
<dbReference type="NCBIfam" id="NF002458">
    <property type="entry name" value="PRK01641.1"/>
    <property type="match status" value="1"/>
</dbReference>
<dbReference type="PANTHER" id="PTHR43345:SF5">
    <property type="entry name" value="3-ISOPROPYLMALATE DEHYDRATASE SMALL SUBUNIT"/>
    <property type="match status" value="1"/>
</dbReference>
<dbReference type="PANTHER" id="PTHR43345">
    <property type="entry name" value="3-ISOPROPYLMALATE DEHYDRATASE SMALL SUBUNIT 2-RELATED-RELATED"/>
    <property type="match status" value="1"/>
</dbReference>
<dbReference type="Pfam" id="PF00694">
    <property type="entry name" value="Aconitase_C"/>
    <property type="match status" value="1"/>
</dbReference>
<dbReference type="SUPFAM" id="SSF52016">
    <property type="entry name" value="LeuD/IlvD-like"/>
    <property type="match status" value="1"/>
</dbReference>
<comment type="function">
    <text evidence="1">Catalyzes the isomerization between 2-isopropylmalate and 3-isopropylmalate, via the formation of 2-isopropylmaleate.</text>
</comment>
<comment type="catalytic activity">
    <reaction evidence="1">
        <text>(2R,3S)-3-isopropylmalate = (2S)-2-isopropylmalate</text>
        <dbReference type="Rhea" id="RHEA:32287"/>
        <dbReference type="ChEBI" id="CHEBI:1178"/>
        <dbReference type="ChEBI" id="CHEBI:35121"/>
        <dbReference type="EC" id="4.2.1.33"/>
    </reaction>
</comment>
<comment type="pathway">
    <text evidence="1">Amino-acid biosynthesis; L-leucine biosynthesis; L-leucine from 3-methyl-2-oxobutanoate: step 2/4.</text>
</comment>
<comment type="subunit">
    <text evidence="1">Heterodimer of LeuC and LeuD.</text>
</comment>
<comment type="similarity">
    <text evidence="1">Belongs to the LeuD family. LeuD type 1 subfamily.</text>
</comment>
<accession>Q07WH2</accession>